<accession>B0TQM2</accession>
<evidence type="ECO:0000255" key="1">
    <source>
        <dbReference type="HAMAP-Rule" id="MF_01026"/>
    </source>
</evidence>
<keyword id="KW-0004">4Fe-4S</keyword>
<keyword id="KW-0028">Amino-acid biosynthesis</keyword>
<keyword id="KW-0100">Branched-chain amino acid biosynthesis</keyword>
<keyword id="KW-0408">Iron</keyword>
<keyword id="KW-0411">Iron-sulfur</keyword>
<keyword id="KW-0432">Leucine biosynthesis</keyword>
<keyword id="KW-0456">Lyase</keyword>
<keyword id="KW-0479">Metal-binding</keyword>
<protein>
    <recommendedName>
        <fullName evidence="1">3-isopropylmalate dehydratase large subunit</fullName>
        <ecNumber evidence="1">4.2.1.33</ecNumber>
    </recommendedName>
    <alternativeName>
        <fullName evidence="1">Alpha-IPM isomerase</fullName>
        <shortName evidence="1">IPMI</shortName>
    </alternativeName>
    <alternativeName>
        <fullName evidence="1">Isopropylmalate isomerase</fullName>
    </alternativeName>
</protein>
<organism>
    <name type="scientific">Shewanella halifaxensis (strain HAW-EB4)</name>
    <dbReference type="NCBI Taxonomy" id="458817"/>
    <lineage>
        <taxon>Bacteria</taxon>
        <taxon>Pseudomonadati</taxon>
        <taxon>Pseudomonadota</taxon>
        <taxon>Gammaproteobacteria</taxon>
        <taxon>Alteromonadales</taxon>
        <taxon>Shewanellaceae</taxon>
        <taxon>Shewanella</taxon>
    </lineage>
</organism>
<name>LEUC_SHEHH</name>
<proteinExistence type="inferred from homology"/>
<comment type="function">
    <text evidence="1">Catalyzes the isomerization between 2-isopropylmalate and 3-isopropylmalate, via the formation of 2-isopropylmaleate.</text>
</comment>
<comment type="catalytic activity">
    <reaction evidence="1">
        <text>(2R,3S)-3-isopropylmalate = (2S)-2-isopropylmalate</text>
        <dbReference type="Rhea" id="RHEA:32287"/>
        <dbReference type="ChEBI" id="CHEBI:1178"/>
        <dbReference type="ChEBI" id="CHEBI:35121"/>
        <dbReference type="EC" id="4.2.1.33"/>
    </reaction>
</comment>
<comment type="cofactor">
    <cofactor evidence="1">
        <name>[4Fe-4S] cluster</name>
        <dbReference type="ChEBI" id="CHEBI:49883"/>
    </cofactor>
    <text evidence="1">Binds 1 [4Fe-4S] cluster per subunit.</text>
</comment>
<comment type="pathway">
    <text evidence="1">Amino-acid biosynthesis; L-leucine biosynthesis; L-leucine from 3-methyl-2-oxobutanoate: step 2/4.</text>
</comment>
<comment type="subunit">
    <text evidence="1">Heterodimer of LeuC and LeuD.</text>
</comment>
<comment type="similarity">
    <text evidence="1">Belongs to the aconitase/IPM isomerase family. LeuC type 1 subfamily.</text>
</comment>
<reference key="1">
    <citation type="submission" date="2008-01" db="EMBL/GenBank/DDBJ databases">
        <title>Complete sequence of Shewanella halifaxensis HAW-EB4.</title>
        <authorList>
            <consortium name="US DOE Joint Genome Institute"/>
            <person name="Copeland A."/>
            <person name="Lucas S."/>
            <person name="Lapidus A."/>
            <person name="Glavina del Rio T."/>
            <person name="Dalin E."/>
            <person name="Tice H."/>
            <person name="Bruce D."/>
            <person name="Goodwin L."/>
            <person name="Pitluck S."/>
            <person name="Sims D."/>
            <person name="Brettin T."/>
            <person name="Detter J.C."/>
            <person name="Han C."/>
            <person name="Kuske C.R."/>
            <person name="Schmutz J."/>
            <person name="Larimer F."/>
            <person name="Land M."/>
            <person name="Hauser L."/>
            <person name="Kyrpides N."/>
            <person name="Kim E."/>
            <person name="Zhao J.-S."/>
            <person name="Richardson P."/>
        </authorList>
    </citation>
    <scope>NUCLEOTIDE SEQUENCE [LARGE SCALE GENOMIC DNA]</scope>
    <source>
        <strain>HAW-EB4</strain>
    </source>
</reference>
<sequence length="466" mass="49867">MAKTLYEKVWDNHIVFAGEGEAPIIYVDRHLVHEVTSPQAFSGLKVAGRKLRAPEKTFATMDHNTSTTSASLDALSPMARTQVETLERNCKEFGVRLYDIHHKNQGIVHVMGPELGITLPGTVIVCGDSHTATHGAFGALAFGIGTSEVEHVMATQTLRQLKAKTMKIEVRGKVADGITAKDIVLAIIGKIGMDGGTGYVVEFCGEAIEALSMEGRMTVCNMAIEMGAKAGMIAPDTTTAEYLEGREFAPKGASWEQAVEAWSQLKTDADAVFDATVVIEAKDIAPQLTWGTNPGQVVAIDQLVPNPLDATNPTVRTSIENALQYVDLTAGTLMTDVSINKVFIGSCTNSRIEDLRAAAVHAKGRKVADGVKAIVVPGSGLVKEQAEAEGLDKIFLEAGFEWRLPGCSMCLAMNDDKLEVGDRCASTSNRNFEGRQGRGSRTHLVSPAMAAAAAVAGHFVDIRKPY</sequence>
<dbReference type="EC" id="4.2.1.33" evidence="1"/>
<dbReference type="EMBL" id="CP000931">
    <property type="protein sequence ID" value="ABZ75015.1"/>
    <property type="molecule type" value="Genomic_DNA"/>
</dbReference>
<dbReference type="RefSeq" id="WP_012275569.1">
    <property type="nucleotide sequence ID" value="NC_010334.1"/>
</dbReference>
<dbReference type="SMR" id="B0TQM2"/>
<dbReference type="STRING" id="458817.Shal_0440"/>
<dbReference type="KEGG" id="shl:Shal_0440"/>
<dbReference type="eggNOG" id="COG0065">
    <property type="taxonomic scope" value="Bacteria"/>
</dbReference>
<dbReference type="HOGENOM" id="CLU_006714_3_4_6"/>
<dbReference type="OrthoDB" id="9802769at2"/>
<dbReference type="UniPathway" id="UPA00048">
    <property type="reaction ID" value="UER00071"/>
</dbReference>
<dbReference type="Proteomes" id="UP000001317">
    <property type="component" value="Chromosome"/>
</dbReference>
<dbReference type="GO" id="GO:0003861">
    <property type="term" value="F:3-isopropylmalate dehydratase activity"/>
    <property type="evidence" value="ECO:0007669"/>
    <property type="project" value="UniProtKB-UniRule"/>
</dbReference>
<dbReference type="GO" id="GO:0051539">
    <property type="term" value="F:4 iron, 4 sulfur cluster binding"/>
    <property type="evidence" value="ECO:0007669"/>
    <property type="project" value="UniProtKB-KW"/>
</dbReference>
<dbReference type="GO" id="GO:0046872">
    <property type="term" value="F:metal ion binding"/>
    <property type="evidence" value="ECO:0007669"/>
    <property type="project" value="UniProtKB-KW"/>
</dbReference>
<dbReference type="GO" id="GO:0009098">
    <property type="term" value="P:L-leucine biosynthetic process"/>
    <property type="evidence" value="ECO:0007669"/>
    <property type="project" value="UniProtKB-UniRule"/>
</dbReference>
<dbReference type="CDD" id="cd01583">
    <property type="entry name" value="IPMI"/>
    <property type="match status" value="1"/>
</dbReference>
<dbReference type="FunFam" id="3.30.499.10:FF:000006">
    <property type="entry name" value="3-isopropylmalate dehydratase large subunit"/>
    <property type="match status" value="1"/>
</dbReference>
<dbReference type="FunFam" id="3.30.499.10:FF:000007">
    <property type="entry name" value="3-isopropylmalate dehydratase large subunit"/>
    <property type="match status" value="1"/>
</dbReference>
<dbReference type="Gene3D" id="3.30.499.10">
    <property type="entry name" value="Aconitase, domain 3"/>
    <property type="match status" value="2"/>
</dbReference>
<dbReference type="HAMAP" id="MF_01026">
    <property type="entry name" value="LeuC_type1"/>
    <property type="match status" value="1"/>
</dbReference>
<dbReference type="InterPro" id="IPR004430">
    <property type="entry name" value="3-IsopropMal_deHydase_lsu"/>
</dbReference>
<dbReference type="InterPro" id="IPR015931">
    <property type="entry name" value="Acnase/IPM_dHydase_lsu_aba_1/3"/>
</dbReference>
<dbReference type="InterPro" id="IPR001030">
    <property type="entry name" value="Acoase/IPM_deHydtase_lsu_aba"/>
</dbReference>
<dbReference type="InterPro" id="IPR018136">
    <property type="entry name" value="Aconitase_4Fe-4S_BS"/>
</dbReference>
<dbReference type="InterPro" id="IPR036008">
    <property type="entry name" value="Aconitase_4Fe-4S_dom"/>
</dbReference>
<dbReference type="InterPro" id="IPR050067">
    <property type="entry name" value="IPM_dehydratase_rel_enz"/>
</dbReference>
<dbReference type="InterPro" id="IPR033941">
    <property type="entry name" value="IPMI_cat"/>
</dbReference>
<dbReference type="NCBIfam" id="TIGR00170">
    <property type="entry name" value="leuC"/>
    <property type="match status" value="1"/>
</dbReference>
<dbReference type="NCBIfam" id="NF004016">
    <property type="entry name" value="PRK05478.1"/>
    <property type="match status" value="1"/>
</dbReference>
<dbReference type="NCBIfam" id="NF009116">
    <property type="entry name" value="PRK12466.1"/>
    <property type="match status" value="1"/>
</dbReference>
<dbReference type="PANTHER" id="PTHR43822:SF9">
    <property type="entry name" value="3-ISOPROPYLMALATE DEHYDRATASE"/>
    <property type="match status" value="1"/>
</dbReference>
<dbReference type="PANTHER" id="PTHR43822">
    <property type="entry name" value="HOMOACONITASE, MITOCHONDRIAL-RELATED"/>
    <property type="match status" value="1"/>
</dbReference>
<dbReference type="Pfam" id="PF00330">
    <property type="entry name" value="Aconitase"/>
    <property type="match status" value="1"/>
</dbReference>
<dbReference type="PRINTS" id="PR00415">
    <property type="entry name" value="ACONITASE"/>
</dbReference>
<dbReference type="SUPFAM" id="SSF53732">
    <property type="entry name" value="Aconitase iron-sulfur domain"/>
    <property type="match status" value="1"/>
</dbReference>
<dbReference type="PROSITE" id="PS00450">
    <property type="entry name" value="ACONITASE_1"/>
    <property type="match status" value="1"/>
</dbReference>
<dbReference type="PROSITE" id="PS01244">
    <property type="entry name" value="ACONITASE_2"/>
    <property type="match status" value="1"/>
</dbReference>
<gene>
    <name evidence="1" type="primary">leuC</name>
    <name type="ordered locus">Shal_0440</name>
</gene>
<feature type="chain" id="PRO_1000084226" description="3-isopropylmalate dehydratase large subunit">
    <location>
        <begin position="1"/>
        <end position="466"/>
    </location>
</feature>
<feature type="binding site" evidence="1">
    <location>
        <position position="347"/>
    </location>
    <ligand>
        <name>[4Fe-4S] cluster</name>
        <dbReference type="ChEBI" id="CHEBI:49883"/>
    </ligand>
</feature>
<feature type="binding site" evidence="1">
    <location>
        <position position="407"/>
    </location>
    <ligand>
        <name>[4Fe-4S] cluster</name>
        <dbReference type="ChEBI" id="CHEBI:49883"/>
    </ligand>
</feature>
<feature type="binding site" evidence="1">
    <location>
        <position position="410"/>
    </location>
    <ligand>
        <name>[4Fe-4S] cluster</name>
        <dbReference type="ChEBI" id="CHEBI:49883"/>
    </ligand>
</feature>